<feature type="chain" id="PRO_1000045635" description="Probable glycine dehydrogenase (decarboxylating) subunit 1">
    <location>
        <begin position="1"/>
        <end position="445"/>
    </location>
</feature>
<organism>
    <name type="scientific">Anaeromyxobacter dehalogenans (strain 2CP-C)</name>
    <dbReference type="NCBI Taxonomy" id="290397"/>
    <lineage>
        <taxon>Bacteria</taxon>
        <taxon>Pseudomonadati</taxon>
        <taxon>Myxococcota</taxon>
        <taxon>Myxococcia</taxon>
        <taxon>Myxococcales</taxon>
        <taxon>Cystobacterineae</taxon>
        <taxon>Anaeromyxobacteraceae</taxon>
        <taxon>Anaeromyxobacter</taxon>
    </lineage>
</organism>
<sequence>MRYHPHTPDDVRAMLDVVGAERVDDLFRSIPQALRLDRPLDLPPAADEIALFSELRRLAARNETAHPPFVGAGCYPHHVPPVVDQLLLRGEFFTAYTPYQPEISQGTLQALFEWQTFVCLLTGMDVSNASMYDGATATAEAALMAGRITGRDKVVVSAALHPEYRKVLATYLRSTGDEIVTVPFGADGRTDLAALQQAVDGRTACVILGYPNFLGVVDALPEAAAIARKAGALTVSATAEAVSLGLLQAPGALGADVAVGTFQSFGNPMSFGGPAPGFFATREKHVRQMPGRVAGATVDKQGRRGFVLTLSTREQHIRREKATSNICTNSGLCALASTVHLSLLGKRGLAELARLNHGRARMLRDAMERAGCRPVFSGPFFNEQVFDVGDAEAVVAKLAKRGIVAGAPLARWFPDAPSAKGALLCAATELHGPELIQLFAGAVRS</sequence>
<dbReference type="EC" id="1.4.4.2" evidence="1"/>
<dbReference type="EMBL" id="CP000251">
    <property type="protein sequence ID" value="ABC81017.1"/>
    <property type="molecule type" value="Genomic_DNA"/>
</dbReference>
<dbReference type="RefSeq" id="WP_011420300.1">
    <property type="nucleotide sequence ID" value="NC_007760.1"/>
</dbReference>
<dbReference type="SMR" id="Q2IQD6"/>
<dbReference type="STRING" id="290397.Adeh_1243"/>
<dbReference type="KEGG" id="ade:Adeh_1243"/>
<dbReference type="eggNOG" id="COG0403">
    <property type="taxonomic scope" value="Bacteria"/>
</dbReference>
<dbReference type="HOGENOM" id="CLU_004620_0_2_7"/>
<dbReference type="OrthoDB" id="9801272at2"/>
<dbReference type="Proteomes" id="UP000001935">
    <property type="component" value="Chromosome"/>
</dbReference>
<dbReference type="GO" id="GO:0004375">
    <property type="term" value="F:glycine dehydrogenase (decarboxylating) activity"/>
    <property type="evidence" value="ECO:0007669"/>
    <property type="project" value="UniProtKB-EC"/>
</dbReference>
<dbReference type="GO" id="GO:0019464">
    <property type="term" value="P:glycine decarboxylation via glycine cleavage system"/>
    <property type="evidence" value="ECO:0007669"/>
    <property type="project" value="UniProtKB-UniRule"/>
</dbReference>
<dbReference type="GO" id="GO:0009116">
    <property type="term" value="P:nucleoside metabolic process"/>
    <property type="evidence" value="ECO:0007669"/>
    <property type="project" value="InterPro"/>
</dbReference>
<dbReference type="CDD" id="cd00613">
    <property type="entry name" value="GDC-P"/>
    <property type="match status" value="1"/>
</dbReference>
<dbReference type="Gene3D" id="3.90.1150.10">
    <property type="entry name" value="Aspartate Aminotransferase, domain 1"/>
    <property type="match status" value="1"/>
</dbReference>
<dbReference type="Gene3D" id="3.40.640.10">
    <property type="entry name" value="Type I PLP-dependent aspartate aminotransferase-like (Major domain)"/>
    <property type="match status" value="1"/>
</dbReference>
<dbReference type="HAMAP" id="MF_00712">
    <property type="entry name" value="GcvPA"/>
    <property type="match status" value="1"/>
</dbReference>
<dbReference type="InterPro" id="IPR023010">
    <property type="entry name" value="GcvPA"/>
</dbReference>
<dbReference type="InterPro" id="IPR049315">
    <property type="entry name" value="GDC-P_N"/>
</dbReference>
<dbReference type="InterPro" id="IPR020581">
    <property type="entry name" value="GDC_P"/>
</dbReference>
<dbReference type="InterPro" id="IPR015424">
    <property type="entry name" value="PyrdxlP-dep_Trfase"/>
</dbReference>
<dbReference type="InterPro" id="IPR015421">
    <property type="entry name" value="PyrdxlP-dep_Trfase_major"/>
</dbReference>
<dbReference type="InterPro" id="IPR015422">
    <property type="entry name" value="PyrdxlP-dep_Trfase_small"/>
</dbReference>
<dbReference type="NCBIfam" id="NF001696">
    <property type="entry name" value="PRK00451.1"/>
    <property type="match status" value="1"/>
</dbReference>
<dbReference type="PANTHER" id="PTHR42806">
    <property type="entry name" value="GLYCINE CLEAVAGE SYSTEM P-PROTEIN"/>
    <property type="match status" value="1"/>
</dbReference>
<dbReference type="PANTHER" id="PTHR42806:SF1">
    <property type="entry name" value="GLYCINE DEHYDROGENASE (DECARBOXYLATING)"/>
    <property type="match status" value="1"/>
</dbReference>
<dbReference type="Pfam" id="PF02347">
    <property type="entry name" value="GDC-P"/>
    <property type="match status" value="1"/>
</dbReference>
<dbReference type="PIRSF" id="PIRSF006815">
    <property type="entry name" value="GcvPA"/>
    <property type="match status" value="1"/>
</dbReference>
<dbReference type="SUPFAM" id="SSF53383">
    <property type="entry name" value="PLP-dependent transferases"/>
    <property type="match status" value="1"/>
</dbReference>
<reference key="1">
    <citation type="submission" date="2006-01" db="EMBL/GenBank/DDBJ databases">
        <title>Complete sequence of Anaeromyxobacter dehalogenans 2CP-C.</title>
        <authorList>
            <person name="Copeland A."/>
            <person name="Lucas S."/>
            <person name="Lapidus A."/>
            <person name="Barry K."/>
            <person name="Detter J.C."/>
            <person name="Glavina T."/>
            <person name="Hammon N."/>
            <person name="Israni S."/>
            <person name="Pitluck S."/>
            <person name="Brettin T."/>
            <person name="Bruce D."/>
            <person name="Han C."/>
            <person name="Tapia R."/>
            <person name="Gilna P."/>
            <person name="Kiss H."/>
            <person name="Schmutz J."/>
            <person name="Larimer F."/>
            <person name="Land M."/>
            <person name="Kyrpides N."/>
            <person name="Anderson I."/>
            <person name="Sanford R.A."/>
            <person name="Ritalahti K.M."/>
            <person name="Thomas H.S."/>
            <person name="Kirby J.R."/>
            <person name="Zhulin I.B."/>
            <person name="Loeffler F.E."/>
            <person name="Richardson P."/>
        </authorList>
    </citation>
    <scope>NUCLEOTIDE SEQUENCE [LARGE SCALE GENOMIC DNA]</scope>
    <source>
        <strain>2CP-C</strain>
    </source>
</reference>
<comment type="function">
    <text evidence="1">The glycine cleavage system catalyzes the degradation of glycine. The P protein binds the alpha-amino group of glycine through its pyridoxal phosphate cofactor; CO(2) is released and the remaining methylamine moiety is then transferred to the lipoamide cofactor of the H protein.</text>
</comment>
<comment type="catalytic activity">
    <reaction evidence="1">
        <text>N(6)-[(R)-lipoyl]-L-lysyl-[glycine-cleavage complex H protein] + glycine + H(+) = N(6)-[(R)-S(8)-aminomethyldihydrolipoyl]-L-lysyl-[glycine-cleavage complex H protein] + CO2</text>
        <dbReference type="Rhea" id="RHEA:24304"/>
        <dbReference type="Rhea" id="RHEA-COMP:10494"/>
        <dbReference type="Rhea" id="RHEA-COMP:10495"/>
        <dbReference type="ChEBI" id="CHEBI:15378"/>
        <dbReference type="ChEBI" id="CHEBI:16526"/>
        <dbReference type="ChEBI" id="CHEBI:57305"/>
        <dbReference type="ChEBI" id="CHEBI:83099"/>
        <dbReference type="ChEBI" id="CHEBI:83143"/>
        <dbReference type="EC" id="1.4.4.2"/>
    </reaction>
</comment>
<comment type="subunit">
    <text evidence="1">The glycine cleavage system is composed of four proteins: P, T, L and H. In this organism, the P 'protein' is a heterodimer of two subunits.</text>
</comment>
<comment type="similarity">
    <text evidence="1">Belongs to the GcvP family. N-terminal subunit subfamily.</text>
</comment>
<proteinExistence type="inferred from homology"/>
<protein>
    <recommendedName>
        <fullName evidence="1">Probable glycine dehydrogenase (decarboxylating) subunit 1</fullName>
        <ecNumber evidence="1">1.4.4.2</ecNumber>
    </recommendedName>
    <alternativeName>
        <fullName evidence="1">Glycine cleavage system P-protein subunit 1</fullName>
    </alternativeName>
    <alternativeName>
        <fullName evidence="1">Glycine decarboxylase subunit 1</fullName>
    </alternativeName>
    <alternativeName>
        <fullName evidence="1">Glycine dehydrogenase (aminomethyl-transferring) subunit 1</fullName>
    </alternativeName>
</protein>
<keyword id="KW-0560">Oxidoreductase</keyword>
<keyword id="KW-1185">Reference proteome</keyword>
<evidence type="ECO:0000255" key="1">
    <source>
        <dbReference type="HAMAP-Rule" id="MF_00712"/>
    </source>
</evidence>
<accession>Q2IQD6</accession>
<gene>
    <name evidence="1" type="primary">gcvPA</name>
    <name type="ordered locus">Adeh_1243</name>
</gene>
<name>GCSPA_ANADE</name>